<name>QUEC_CHLCH</name>
<gene>
    <name evidence="1" type="primary">queC</name>
    <name type="ordered locus">Cag_1313</name>
</gene>
<reference key="1">
    <citation type="submission" date="2005-08" db="EMBL/GenBank/DDBJ databases">
        <title>Complete sequence of Chlorobium chlorochromatii CaD3.</title>
        <authorList>
            <consortium name="US DOE Joint Genome Institute"/>
            <person name="Copeland A."/>
            <person name="Lucas S."/>
            <person name="Lapidus A."/>
            <person name="Barry K."/>
            <person name="Detter J.C."/>
            <person name="Glavina T."/>
            <person name="Hammon N."/>
            <person name="Israni S."/>
            <person name="Pitluck S."/>
            <person name="Bryant D."/>
            <person name="Schmutz J."/>
            <person name="Larimer F."/>
            <person name="Land M."/>
            <person name="Kyrpides N."/>
            <person name="Ivanova N."/>
            <person name="Richardson P."/>
        </authorList>
    </citation>
    <scope>NUCLEOTIDE SEQUENCE [LARGE SCALE GENOMIC DNA]</scope>
    <source>
        <strain>CaD3</strain>
    </source>
</reference>
<dbReference type="EC" id="6.3.4.20" evidence="1"/>
<dbReference type="EMBL" id="CP000108">
    <property type="protein sequence ID" value="ABB28573.1"/>
    <property type="status" value="ALT_INIT"/>
    <property type="molecule type" value="Genomic_DNA"/>
</dbReference>
<dbReference type="SMR" id="Q3AR02"/>
<dbReference type="STRING" id="340177.Cag_1313"/>
<dbReference type="KEGG" id="cch:Cag_1313"/>
<dbReference type="eggNOG" id="COG0603">
    <property type="taxonomic scope" value="Bacteria"/>
</dbReference>
<dbReference type="HOGENOM" id="CLU_081854_1_0_10"/>
<dbReference type="OrthoDB" id="9789567at2"/>
<dbReference type="UniPathway" id="UPA00391"/>
<dbReference type="GO" id="GO:0005524">
    <property type="term" value="F:ATP binding"/>
    <property type="evidence" value="ECO:0007669"/>
    <property type="project" value="UniProtKB-UniRule"/>
</dbReference>
<dbReference type="GO" id="GO:0016879">
    <property type="term" value="F:ligase activity, forming carbon-nitrogen bonds"/>
    <property type="evidence" value="ECO:0007669"/>
    <property type="project" value="UniProtKB-UniRule"/>
</dbReference>
<dbReference type="GO" id="GO:0008270">
    <property type="term" value="F:zinc ion binding"/>
    <property type="evidence" value="ECO:0007669"/>
    <property type="project" value="UniProtKB-UniRule"/>
</dbReference>
<dbReference type="GO" id="GO:0008616">
    <property type="term" value="P:queuosine biosynthetic process"/>
    <property type="evidence" value="ECO:0007669"/>
    <property type="project" value="UniProtKB-UniRule"/>
</dbReference>
<dbReference type="CDD" id="cd01995">
    <property type="entry name" value="QueC-like"/>
    <property type="match status" value="1"/>
</dbReference>
<dbReference type="Gene3D" id="3.40.50.620">
    <property type="entry name" value="HUPs"/>
    <property type="match status" value="1"/>
</dbReference>
<dbReference type="HAMAP" id="MF_01633">
    <property type="entry name" value="QueC"/>
    <property type="match status" value="1"/>
</dbReference>
<dbReference type="InterPro" id="IPR018317">
    <property type="entry name" value="QueC"/>
</dbReference>
<dbReference type="InterPro" id="IPR014729">
    <property type="entry name" value="Rossmann-like_a/b/a_fold"/>
</dbReference>
<dbReference type="NCBIfam" id="TIGR00364">
    <property type="entry name" value="7-cyano-7-deazaguanine synthase QueC"/>
    <property type="match status" value="1"/>
</dbReference>
<dbReference type="PANTHER" id="PTHR42914">
    <property type="entry name" value="7-CYANO-7-DEAZAGUANINE SYNTHASE"/>
    <property type="match status" value="1"/>
</dbReference>
<dbReference type="PANTHER" id="PTHR42914:SF1">
    <property type="entry name" value="7-CYANO-7-DEAZAGUANINE SYNTHASE"/>
    <property type="match status" value="1"/>
</dbReference>
<dbReference type="Pfam" id="PF06508">
    <property type="entry name" value="QueC"/>
    <property type="match status" value="1"/>
</dbReference>
<dbReference type="PIRSF" id="PIRSF006293">
    <property type="entry name" value="ExsB"/>
    <property type="match status" value="1"/>
</dbReference>
<dbReference type="SUPFAM" id="SSF52402">
    <property type="entry name" value="Adenine nucleotide alpha hydrolases-like"/>
    <property type="match status" value="1"/>
</dbReference>
<organism>
    <name type="scientific">Chlorobium chlorochromatii (strain CaD3)</name>
    <dbReference type="NCBI Taxonomy" id="340177"/>
    <lineage>
        <taxon>Bacteria</taxon>
        <taxon>Pseudomonadati</taxon>
        <taxon>Chlorobiota</taxon>
        <taxon>Chlorobiia</taxon>
        <taxon>Chlorobiales</taxon>
        <taxon>Chlorobiaceae</taxon>
        <taxon>Chlorobium/Pelodictyon group</taxon>
        <taxon>Chlorobium</taxon>
    </lineage>
</organism>
<protein>
    <recommendedName>
        <fullName evidence="1">7-cyano-7-deazaguanine synthase</fullName>
        <ecNumber evidence="1">6.3.4.20</ecNumber>
    </recommendedName>
    <alternativeName>
        <fullName evidence="1">7-cyano-7-carbaguanine synthase</fullName>
    </alternativeName>
    <alternativeName>
        <fullName evidence="1">PreQ(0) synthase</fullName>
    </alternativeName>
    <alternativeName>
        <fullName evidence="1">Queuosine biosynthesis protein QueC</fullName>
    </alternativeName>
</protein>
<evidence type="ECO:0000255" key="1">
    <source>
        <dbReference type="HAMAP-Rule" id="MF_01633"/>
    </source>
</evidence>
<evidence type="ECO:0000305" key="2"/>
<feature type="chain" id="PRO_0000246826" description="7-cyano-7-deazaguanine synthase">
    <location>
        <begin position="1"/>
        <end position="228"/>
    </location>
</feature>
<feature type="binding site" evidence="1">
    <location>
        <begin position="7"/>
        <end position="17"/>
    </location>
    <ligand>
        <name>ATP</name>
        <dbReference type="ChEBI" id="CHEBI:30616"/>
    </ligand>
</feature>
<feature type="binding site" evidence="1">
    <location>
        <position position="187"/>
    </location>
    <ligand>
        <name>Zn(2+)</name>
        <dbReference type="ChEBI" id="CHEBI:29105"/>
    </ligand>
</feature>
<feature type="binding site" evidence="1">
    <location>
        <position position="195"/>
    </location>
    <ligand>
        <name>Zn(2+)</name>
        <dbReference type="ChEBI" id="CHEBI:29105"/>
    </ligand>
</feature>
<feature type="binding site" evidence="1">
    <location>
        <position position="198"/>
    </location>
    <ligand>
        <name>Zn(2+)</name>
        <dbReference type="ChEBI" id="CHEBI:29105"/>
    </ligand>
</feature>
<feature type="binding site" evidence="1">
    <location>
        <position position="201"/>
    </location>
    <ligand>
        <name>Zn(2+)</name>
        <dbReference type="ChEBI" id="CHEBI:29105"/>
    </ligand>
</feature>
<keyword id="KW-0067">ATP-binding</keyword>
<keyword id="KW-0436">Ligase</keyword>
<keyword id="KW-0479">Metal-binding</keyword>
<keyword id="KW-0547">Nucleotide-binding</keyword>
<keyword id="KW-0671">Queuosine biosynthesis</keyword>
<keyword id="KW-0862">Zinc</keyword>
<sequence length="228" mass="25279">MKAILLLSGGMDSLVTTAIAQQAGFELAAMHVNYGQRTMQRELNSFRAICSHYSIQQRLEINADFLGKIGGSSLTDLSMPVSVANLESHAIPASYVPFRNAGFLSMAVSWAEVIGAERIFIGAVEEDSSGYPDCRKIFYEAFNRVIELGTKPETHIEVVTPLIALKKWEIVRKGIELHAPFAFSWSCYKNEGQACGVCDSCALRLRAFEQAGMEDPIDYETRPHYIDC</sequence>
<proteinExistence type="inferred from homology"/>
<comment type="function">
    <text evidence="1">Catalyzes the ATP-dependent conversion of 7-carboxy-7-deazaguanine (CDG) to 7-cyano-7-deazaguanine (preQ(0)).</text>
</comment>
<comment type="catalytic activity">
    <reaction evidence="1">
        <text>7-carboxy-7-deazaguanine + NH4(+) + ATP = 7-cyano-7-deazaguanine + ADP + phosphate + H2O + H(+)</text>
        <dbReference type="Rhea" id="RHEA:27982"/>
        <dbReference type="ChEBI" id="CHEBI:15377"/>
        <dbReference type="ChEBI" id="CHEBI:15378"/>
        <dbReference type="ChEBI" id="CHEBI:28938"/>
        <dbReference type="ChEBI" id="CHEBI:30616"/>
        <dbReference type="ChEBI" id="CHEBI:43474"/>
        <dbReference type="ChEBI" id="CHEBI:45075"/>
        <dbReference type="ChEBI" id="CHEBI:61036"/>
        <dbReference type="ChEBI" id="CHEBI:456216"/>
        <dbReference type="EC" id="6.3.4.20"/>
    </reaction>
</comment>
<comment type="cofactor">
    <cofactor evidence="1">
        <name>Zn(2+)</name>
        <dbReference type="ChEBI" id="CHEBI:29105"/>
    </cofactor>
    <text evidence="1">Binds 1 zinc ion per subunit.</text>
</comment>
<comment type="pathway">
    <text evidence="1">Purine metabolism; 7-cyano-7-deazaguanine biosynthesis.</text>
</comment>
<comment type="similarity">
    <text evidence="1">Belongs to the QueC family.</text>
</comment>
<comment type="sequence caution" evidence="2">
    <conflict type="erroneous initiation">
        <sequence resource="EMBL-CDS" id="ABB28573"/>
    </conflict>
</comment>
<accession>Q3AR02</accession>